<protein>
    <recommendedName>
        <fullName evidence="1">Orotate phosphoribosyltransferase</fullName>
        <shortName evidence="1">OPRT</shortName>
        <shortName evidence="1">OPRTase</shortName>
        <ecNumber evidence="1">2.4.2.10</ecNumber>
    </recommendedName>
</protein>
<sequence length="209" mass="23269">MNYTKEVALSLLKIEAVRLRPEEPFKWASGWNSPIYCDNRLTLSFPESRNLIRDGLVDLIRTHYPACECIAGVATAGIPQGAIIADSMNLPMIYVRPKPKDHGMQNLIEGKITKGQKIVVVEDLISTGGSSLKAVEALQEGGFEILGMIGIFTYGFQIAEDNFKNAGITLHTLSNYDELIKEAVANNYVKQDQLQTLGEWRKNPGDWKK</sequence>
<keyword id="KW-0328">Glycosyltransferase</keyword>
<keyword id="KW-0460">Magnesium</keyword>
<keyword id="KW-0665">Pyrimidine biosynthesis</keyword>
<keyword id="KW-1185">Reference proteome</keyword>
<keyword id="KW-0808">Transferase</keyword>
<organism>
    <name type="scientific">Cytophaga hutchinsonii (strain ATCC 33406 / DSM 1761 / CIP 103989 / NBRC 15051 / NCIMB 9469 / D465)</name>
    <dbReference type="NCBI Taxonomy" id="269798"/>
    <lineage>
        <taxon>Bacteria</taxon>
        <taxon>Pseudomonadati</taxon>
        <taxon>Bacteroidota</taxon>
        <taxon>Cytophagia</taxon>
        <taxon>Cytophagales</taxon>
        <taxon>Cytophagaceae</taxon>
        <taxon>Cytophaga</taxon>
    </lineage>
</organism>
<accession>Q11RP3</accession>
<feature type="chain" id="PRO_1000066225" description="Orotate phosphoribosyltransferase">
    <location>
        <begin position="1"/>
        <end position="209"/>
    </location>
</feature>
<feature type="binding site" evidence="1">
    <location>
        <position position="96"/>
    </location>
    <ligand>
        <name>5-phospho-alpha-D-ribose 1-diphosphate</name>
        <dbReference type="ChEBI" id="CHEBI:58017"/>
        <note>ligand shared between dimeric partners</note>
    </ligand>
</feature>
<feature type="binding site" evidence="1">
    <location>
        <position position="100"/>
    </location>
    <ligand>
        <name>5-phospho-alpha-D-ribose 1-diphosphate</name>
        <dbReference type="ChEBI" id="CHEBI:58017"/>
        <note>ligand shared between dimeric partners</note>
    </ligand>
</feature>
<feature type="binding site" evidence="1">
    <location>
        <position position="102"/>
    </location>
    <ligand>
        <name>5-phospho-alpha-D-ribose 1-diphosphate</name>
        <dbReference type="ChEBI" id="CHEBI:58017"/>
        <note>ligand shared between dimeric partners</note>
    </ligand>
</feature>
<feature type="binding site" description="in other chain" evidence="1">
    <location>
        <begin position="122"/>
        <end position="130"/>
    </location>
    <ligand>
        <name>5-phospho-alpha-D-ribose 1-diphosphate</name>
        <dbReference type="ChEBI" id="CHEBI:58017"/>
        <note>ligand shared between dimeric partners</note>
    </ligand>
</feature>
<feature type="binding site" evidence="1">
    <location>
        <position position="126"/>
    </location>
    <ligand>
        <name>orotate</name>
        <dbReference type="ChEBI" id="CHEBI:30839"/>
    </ligand>
</feature>
<proteinExistence type="inferred from homology"/>
<evidence type="ECO:0000255" key="1">
    <source>
        <dbReference type="HAMAP-Rule" id="MF_01208"/>
    </source>
</evidence>
<gene>
    <name evidence="1" type="primary">pyrE</name>
    <name type="ordered locus">CHU_2669</name>
</gene>
<comment type="function">
    <text evidence="1">Catalyzes the transfer of a ribosyl phosphate group from 5-phosphoribose 1-diphosphate to orotate, leading to the formation of orotidine monophosphate (OMP).</text>
</comment>
<comment type="catalytic activity">
    <reaction evidence="1">
        <text>orotidine 5'-phosphate + diphosphate = orotate + 5-phospho-alpha-D-ribose 1-diphosphate</text>
        <dbReference type="Rhea" id="RHEA:10380"/>
        <dbReference type="ChEBI" id="CHEBI:30839"/>
        <dbReference type="ChEBI" id="CHEBI:33019"/>
        <dbReference type="ChEBI" id="CHEBI:57538"/>
        <dbReference type="ChEBI" id="CHEBI:58017"/>
        <dbReference type="EC" id="2.4.2.10"/>
    </reaction>
</comment>
<comment type="cofactor">
    <cofactor evidence="1">
        <name>Mg(2+)</name>
        <dbReference type="ChEBI" id="CHEBI:18420"/>
    </cofactor>
</comment>
<comment type="pathway">
    <text evidence="1">Pyrimidine metabolism; UMP biosynthesis via de novo pathway; UMP from orotate: step 1/2.</text>
</comment>
<comment type="subunit">
    <text evidence="1">Homodimer.</text>
</comment>
<comment type="similarity">
    <text evidence="1">Belongs to the purine/pyrimidine phosphoribosyltransferase family. PyrE subfamily.</text>
</comment>
<reference key="1">
    <citation type="journal article" date="2007" name="Appl. Environ. Microbiol.">
        <title>Genome sequence of the cellulolytic gliding bacterium Cytophaga hutchinsonii.</title>
        <authorList>
            <person name="Xie G."/>
            <person name="Bruce D.C."/>
            <person name="Challacombe J.F."/>
            <person name="Chertkov O."/>
            <person name="Detter J.C."/>
            <person name="Gilna P."/>
            <person name="Han C.S."/>
            <person name="Lucas S."/>
            <person name="Misra M."/>
            <person name="Myers G.L."/>
            <person name="Richardson P."/>
            <person name="Tapia R."/>
            <person name="Thayer N."/>
            <person name="Thompson L.S."/>
            <person name="Brettin T.S."/>
            <person name="Henrissat B."/>
            <person name="Wilson D.B."/>
            <person name="McBride M.J."/>
        </authorList>
    </citation>
    <scope>NUCLEOTIDE SEQUENCE [LARGE SCALE GENOMIC DNA]</scope>
    <source>
        <strain>ATCC 33406 / DSM 1761 / JCM 20678 / CIP 103989 / IAM 12607 / NBRC 15051 / NCIMB 9469 / D465</strain>
    </source>
</reference>
<name>PYRE_CYTH3</name>
<dbReference type="EC" id="2.4.2.10" evidence="1"/>
<dbReference type="EMBL" id="CP000383">
    <property type="protein sequence ID" value="ABG59921.1"/>
    <property type="molecule type" value="Genomic_DNA"/>
</dbReference>
<dbReference type="RefSeq" id="WP_011586031.1">
    <property type="nucleotide sequence ID" value="NC_008255.1"/>
</dbReference>
<dbReference type="SMR" id="Q11RP3"/>
<dbReference type="STRING" id="269798.CHU_2669"/>
<dbReference type="KEGG" id="chu:CHU_2669"/>
<dbReference type="eggNOG" id="COG0461">
    <property type="taxonomic scope" value="Bacteria"/>
</dbReference>
<dbReference type="HOGENOM" id="CLU_074878_1_1_10"/>
<dbReference type="OrthoDB" id="9802134at2"/>
<dbReference type="UniPathway" id="UPA00070">
    <property type="reaction ID" value="UER00119"/>
</dbReference>
<dbReference type="Proteomes" id="UP000001822">
    <property type="component" value="Chromosome"/>
</dbReference>
<dbReference type="GO" id="GO:0000287">
    <property type="term" value="F:magnesium ion binding"/>
    <property type="evidence" value="ECO:0007669"/>
    <property type="project" value="UniProtKB-UniRule"/>
</dbReference>
<dbReference type="GO" id="GO:0004588">
    <property type="term" value="F:orotate phosphoribosyltransferase activity"/>
    <property type="evidence" value="ECO:0007669"/>
    <property type="project" value="UniProtKB-UniRule"/>
</dbReference>
<dbReference type="GO" id="GO:0044205">
    <property type="term" value="P:'de novo' UMP biosynthetic process"/>
    <property type="evidence" value="ECO:0007669"/>
    <property type="project" value="UniProtKB-UniRule"/>
</dbReference>
<dbReference type="GO" id="GO:0019856">
    <property type="term" value="P:pyrimidine nucleobase biosynthetic process"/>
    <property type="evidence" value="ECO:0007669"/>
    <property type="project" value="TreeGrafter"/>
</dbReference>
<dbReference type="CDD" id="cd06223">
    <property type="entry name" value="PRTases_typeI"/>
    <property type="match status" value="1"/>
</dbReference>
<dbReference type="Gene3D" id="3.40.50.2020">
    <property type="match status" value="1"/>
</dbReference>
<dbReference type="HAMAP" id="MF_01208">
    <property type="entry name" value="PyrE"/>
    <property type="match status" value="1"/>
</dbReference>
<dbReference type="InterPro" id="IPR023031">
    <property type="entry name" value="OPRT"/>
</dbReference>
<dbReference type="InterPro" id="IPR004467">
    <property type="entry name" value="Or_phspho_trans_dom"/>
</dbReference>
<dbReference type="InterPro" id="IPR000836">
    <property type="entry name" value="PRibTrfase_dom"/>
</dbReference>
<dbReference type="InterPro" id="IPR029057">
    <property type="entry name" value="PRTase-like"/>
</dbReference>
<dbReference type="NCBIfam" id="TIGR00336">
    <property type="entry name" value="pyrE"/>
    <property type="match status" value="1"/>
</dbReference>
<dbReference type="PANTHER" id="PTHR19278">
    <property type="entry name" value="OROTATE PHOSPHORIBOSYLTRANSFERASE"/>
    <property type="match status" value="1"/>
</dbReference>
<dbReference type="PANTHER" id="PTHR19278:SF9">
    <property type="entry name" value="URIDINE 5'-MONOPHOSPHATE SYNTHASE"/>
    <property type="match status" value="1"/>
</dbReference>
<dbReference type="Pfam" id="PF00156">
    <property type="entry name" value="Pribosyltran"/>
    <property type="match status" value="1"/>
</dbReference>
<dbReference type="SUPFAM" id="SSF53271">
    <property type="entry name" value="PRTase-like"/>
    <property type="match status" value="1"/>
</dbReference>
<dbReference type="PROSITE" id="PS00103">
    <property type="entry name" value="PUR_PYR_PR_TRANSFER"/>
    <property type="match status" value="1"/>
</dbReference>